<proteinExistence type="inferred from homology"/>
<comment type="function">
    <text evidence="1">Component of the Mediator complex, a coactivator involved in the regulated transcription of nearly all RNA polymerase II-dependent genes. Mediator functions as a bridge to convey information from gene-specific regulatory proteins to the basal RNA polymerase II transcription machinery. Mediator is recruited to promoters by direct interactions with regulatory proteins and serves as a scaffold for the assembly of a functional preinitiation complex with RNA polymerase II and the general transcription factors (By similarity).</text>
</comment>
<comment type="subunit">
    <text evidence="1">Component of the Mediator complex.</text>
</comment>
<comment type="subcellular location">
    <subcellularLocation>
        <location evidence="1">Nucleus</location>
    </subcellularLocation>
</comment>
<comment type="similarity">
    <text evidence="3">Belongs to the Mediator complex subunit 18 family.</text>
</comment>
<reference key="1">
    <citation type="journal article" date="2004" name="Nature">
        <title>Genome evolution in yeasts.</title>
        <authorList>
            <person name="Dujon B."/>
            <person name="Sherman D."/>
            <person name="Fischer G."/>
            <person name="Durrens P."/>
            <person name="Casaregola S."/>
            <person name="Lafontaine I."/>
            <person name="de Montigny J."/>
            <person name="Marck C."/>
            <person name="Neuveglise C."/>
            <person name="Talla E."/>
            <person name="Goffard N."/>
            <person name="Frangeul L."/>
            <person name="Aigle M."/>
            <person name="Anthouard V."/>
            <person name="Babour A."/>
            <person name="Barbe V."/>
            <person name="Barnay S."/>
            <person name="Blanchin S."/>
            <person name="Beckerich J.-M."/>
            <person name="Beyne E."/>
            <person name="Bleykasten C."/>
            <person name="Boisrame A."/>
            <person name="Boyer J."/>
            <person name="Cattolico L."/>
            <person name="Confanioleri F."/>
            <person name="de Daruvar A."/>
            <person name="Despons L."/>
            <person name="Fabre E."/>
            <person name="Fairhead C."/>
            <person name="Ferry-Dumazet H."/>
            <person name="Groppi A."/>
            <person name="Hantraye F."/>
            <person name="Hennequin C."/>
            <person name="Jauniaux N."/>
            <person name="Joyet P."/>
            <person name="Kachouri R."/>
            <person name="Kerrest A."/>
            <person name="Koszul R."/>
            <person name="Lemaire M."/>
            <person name="Lesur I."/>
            <person name="Ma L."/>
            <person name="Muller H."/>
            <person name="Nicaud J.-M."/>
            <person name="Nikolski M."/>
            <person name="Oztas S."/>
            <person name="Ozier-Kalogeropoulos O."/>
            <person name="Pellenz S."/>
            <person name="Potier S."/>
            <person name="Richard G.-F."/>
            <person name="Straub M.-L."/>
            <person name="Suleau A."/>
            <person name="Swennen D."/>
            <person name="Tekaia F."/>
            <person name="Wesolowski-Louvel M."/>
            <person name="Westhof E."/>
            <person name="Wirth B."/>
            <person name="Zeniou-Meyer M."/>
            <person name="Zivanovic Y."/>
            <person name="Bolotin-Fukuhara M."/>
            <person name="Thierry A."/>
            <person name="Bouchier C."/>
            <person name="Caudron B."/>
            <person name="Scarpelli C."/>
            <person name="Gaillardin C."/>
            <person name="Weissenbach J."/>
            <person name="Wincker P."/>
            <person name="Souciet J.-L."/>
        </authorList>
    </citation>
    <scope>NUCLEOTIDE SEQUENCE [LARGE SCALE GENOMIC DNA]</scope>
    <source>
        <strain>ATCC 36239 / CBS 767 / BCRC 21394 / JCM 1990 / NBRC 0083 / IGC 2968</strain>
    </source>
</reference>
<protein>
    <recommendedName>
        <fullName>Mediator of RNA polymerase II transcription subunit 18</fullName>
    </recommendedName>
    <alternativeName>
        <fullName>Mediator complex subunit 18</fullName>
    </alternativeName>
</protein>
<accession>Q6BXL9</accession>
<name>MED18_DEBHA</name>
<organism>
    <name type="scientific">Debaryomyces hansenii (strain ATCC 36239 / CBS 767 / BCRC 21394 / JCM 1990 / NBRC 0083 / IGC 2968)</name>
    <name type="common">Yeast</name>
    <name type="synonym">Torulaspora hansenii</name>
    <dbReference type="NCBI Taxonomy" id="284592"/>
    <lineage>
        <taxon>Eukaryota</taxon>
        <taxon>Fungi</taxon>
        <taxon>Dikarya</taxon>
        <taxon>Ascomycota</taxon>
        <taxon>Saccharomycotina</taxon>
        <taxon>Pichiomycetes</taxon>
        <taxon>Debaryomycetaceae</taxon>
        <taxon>Debaryomyces</taxon>
    </lineage>
</organism>
<sequence>MVHQLSLVSMVSHSNYVQTISTLQALTGLLTPQPISTYTLVTKPHDVFKPKFEPGKVNQIEQFYMRCVTTWNDETGNKFDLASPVLENDTDILVNRLFLGVDDRRNWTMQISDIPIAGKNQACSAQTIYESTLVHHHTKVMDKEKVQSDVSNESNMDIDDKDEDKKENIKKEESGEEVKGSGEEVKGSGEEVKGSGEEAKKSGEEAKEHSEGNASQTVKELVVLNRRDSFLQFLEDLGYDVINQFWMKGVRFFHGDIVIEIFKVFVRDDEKDAEKDKIRLKLLDPSNTFQIRTYINVPKSTDVELINQGTKDLLKLQEFLKNLIKLEIPDRMFMDSRVTYK</sequence>
<gene>
    <name type="primary">SRB5</name>
    <name type="synonym">MED18</name>
    <name type="ordered locus">DEHA2B01914g</name>
</gene>
<keyword id="KW-0010">Activator</keyword>
<keyword id="KW-0539">Nucleus</keyword>
<keyword id="KW-1185">Reference proteome</keyword>
<keyword id="KW-0804">Transcription</keyword>
<keyword id="KW-0805">Transcription regulation</keyword>
<feature type="chain" id="PRO_0000304760" description="Mediator of RNA polymerase II transcription subunit 18">
    <location>
        <begin position="1"/>
        <end position="341"/>
    </location>
</feature>
<feature type="region of interest" description="Disordered" evidence="2">
    <location>
        <begin position="139"/>
        <end position="216"/>
    </location>
</feature>
<feature type="compositionally biased region" description="Basic and acidic residues" evidence="2">
    <location>
        <begin position="163"/>
        <end position="211"/>
    </location>
</feature>
<evidence type="ECO:0000250" key="1"/>
<evidence type="ECO:0000256" key="2">
    <source>
        <dbReference type="SAM" id="MobiDB-lite"/>
    </source>
</evidence>
<evidence type="ECO:0000305" key="3"/>
<dbReference type="EMBL" id="CR382134">
    <property type="protein sequence ID" value="CAG85036.1"/>
    <property type="molecule type" value="Genomic_DNA"/>
</dbReference>
<dbReference type="RefSeq" id="XP_457050.1">
    <property type="nucleotide sequence ID" value="XM_457050.1"/>
</dbReference>
<dbReference type="SMR" id="Q6BXL9"/>
<dbReference type="FunCoup" id="Q6BXL9">
    <property type="interactions" value="137"/>
</dbReference>
<dbReference type="STRING" id="284592.Q6BXL9"/>
<dbReference type="GeneID" id="2913032"/>
<dbReference type="KEGG" id="dha:DEHA2B01914g"/>
<dbReference type="VEuPathDB" id="FungiDB:DEHA2B01914g"/>
<dbReference type="eggNOG" id="ENOG502S41C">
    <property type="taxonomic scope" value="Eukaryota"/>
</dbReference>
<dbReference type="HOGENOM" id="CLU_058255_0_0_1"/>
<dbReference type="InParanoid" id="Q6BXL9"/>
<dbReference type="OMA" id="PGKVNQI"/>
<dbReference type="OrthoDB" id="5348092at2759"/>
<dbReference type="Proteomes" id="UP000000599">
    <property type="component" value="Chromosome B"/>
</dbReference>
<dbReference type="GO" id="GO:0070847">
    <property type="term" value="C:core mediator complex"/>
    <property type="evidence" value="ECO:0007669"/>
    <property type="project" value="TreeGrafter"/>
</dbReference>
<dbReference type="GO" id="GO:0016592">
    <property type="term" value="C:mediator complex"/>
    <property type="evidence" value="ECO:0007669"/>
    <property type="project" value="InterPro"/>
</dbReference>
<dbReference type="GO" id="GO:0003712">
    <property type="term" value="F:transcription coregulator activity"/>
    <property type="evidence" value="ECO:0007669"/>
    <property type="project" value="InterPro"/>
</dbReference>
<dbReference type="GO" id="GO:0006357">
    <property type="term" value="P:regulation of transcription by RNA polymerase II"/>
    <property type="evidence" value="ECO:0007669"/>
    <property type="project" value="InterPro"/>
</dbReference>
<dbReference type="GO" id="GO:0006369">
    <property type="term" value="P:termination of RNA polymerase II transcription"/>
    <property type="evidence" value="ECO:0007669"/>
    <property type="project" value="TreeGrafter"/>
</dbReference>
<dbReference type="Gene3D" id="2.40.320.10">
    <property type="entry name" value="Hypothetical Protein Pfu-838710-001"/>
    <property type="match status" value="1"/>
</dbReference>
<dbReference type="InterPro" id="IPR019095">
    <property type="entry name" value="Mediator_Med18"/>
</dbReference>
<dbReference type="PANTHER" id="PTHR13321:SF2">
    <property type="entry name" value="MEDIATOR OF RNA POLYMERASE II TRANSCRIPTION SUBUNIT 18"/>
    <property type="match status" value="1"/>
</dbReference>
<dbReference type="PANTHER" id="PTHR13321">
    <property type="entry name" value="MEDIATOR OF RNA POLYMERASE II TRANSCRIPTION, SUBUNIT 18"/>
    <property type="match status" value="1"/>
</dbReference>
<dbReference type="Pfam" id="PF09637">
    <property type="entry name" value="Med18"/>
    <property type="match status" value="1"/>
</dbReference>